<name>PURL_MYCBO</name>
<evidence type="ECO:0000255" key="1">
    <source>
        <dbReference type="HAMAP-Rule" id="MF_00420"/>
    </source>
</evidence>
<evidence type="ECO:0000256" key="2">
    <source>
        <dbReference type="SAM" id="MobiDB-lite"/>
    </source>
</evidence>
<gene>
    <name evidence="1" type="primary">purL</name>
    <name type="ordered locus">BQ2027_MB0826</name>
</gene>
<comment type="function">
    <text evidence="1">Part of the phosphoribosylformylglycinamidine synthase complex involved in the purines biosynthetic pathway. Catalyzes the ATP-dependent conversion of formylglycinamide ribonucleotide (FGAR) and glutamine to yield formylglycinamidine ribonucleotide (FGAM) and glutamate. The FGAM synthase complex is composed of three subunits. PurQ produces an ammonia molecule by converting glutamine to glutamate. PurL transfers the ammonia molecule to FGAR to form FGAM in an ATP-dependent manner. PurS interacts with PurQ and PurL and is thought to assist in the transfer of the ammonia molecule from PurQ to PurL.</text>
</comment>
<comment type="catalytic activity">
    <reaction evidence="1">
        <text>N(2)-formyl-N(1)-(5-phospho-beta-D-ribosyl)glycinamide + L-glutamine + ATP + H2O = 2-formamido-N(1)-(5-O-phospho-beta-D-ribosyl)acetamidine + L-glutamate + ADP + phosphate + H(+)</text>
        <dbReference type="Rhea" id="RHEA:17129"/>
        <dbReference type="ChEBI" id="CHEBI:15377"/>
        <dbReference type="ChEBI" id="CHEBI:15378"/>
        <dbReference type="ChEBI" id="CHEBI:29985"/>
        <dbReference type="ChEBI" id="CHEBI:30616"/>
        <dbReference type="ChEBI" id="CHEBI:43474"/>
        <dbReference type="ChEBI" id="CHEBI:58359"/>
        <dbReference type="ChEBI" id="CHEBI:147286"/>
        <dbReference type="ChEBI" id="CHEBI:147287"/>
        <dbReference type="ChEBI" id="CHEBI:456216"/>
        <dbReference type="EC" id="6.3.5.3"/>
    </reaction>
</comment>
<comment type="pathway">
    <text evidence="1">Purine metabolism; IMP biosynthesis via de novo pathway; 5-amino-1-(5-phospho-D-ribosyl)imidazole from N(2)-formyl-N(1)-(5-phospho-D-ribosyl)glycinamide: step 1/2.</text>
</comment>
<comment type="subunit">
    <text evidence="1">Monomer. Part of the FGAM synthase complex composed of 1 PurL, 1 PurQ and 2 PurS subunits.</text>
</comment>
<comment type="subcellular location">
    <subcellularLocation>
        <location evidence="1">Cytoplasm</location>
    </subcellularLocation>
</comment>
<comment type="similarity">
    <text evidence="1">Belongs to the FGAMS family.</text>
</comment>
<reference key="1">
    <citation type="journal article" date="2003" name="Proc. Natl. Acad. Sci. U.S.A.">
        <title>The complete genome sequence of Mycobacterium bovis.</title>
        <authorList>
            <person name="Garnier T."/>
            <person name="Eiglmeier K."/>
            <person name="Camus J.-C."/>
            <person name="Medina N."/>
            <person name="Mansoor H."/>
            <person name="Pryor M."/>
            <person name="Duthoy S."/>
            <person name="Grondin S."/>
            <person name="Lacroix C."/>
            <person name="Monsempe C."/>
            <person name="Simon S."/>
            <person name="Harris B."/>
            <person name="Atkin R."/>
            <person name="Doggett J."/>
            <person name="Mayes R."/>
            <person name="Keating L."/>
            <person name="Wheeler P.R."/>
            <person name="Parkhill J."/>
            <person name="Barrell B.G."/>
            <person name="Cole S.T."/>
            <person name="Gordon S.V."/>
            <person name="Hewinson R.G."/>
        </authorList>
    </citation>
    <scope>NUCLEOTIDE SEQUENCE [LARGE SCALE GENOMIC DNA]</scope>
    <source>
        <strain>ATCC BAA-935 / AF2122/97</strain>
    </source>
</reference>
<reference key="2">
    <citation type="journal article" date="2017" name="Genome Announc.">
        <title>Updated reference genome sequence and annotation of Mycobacterium bovis AF2122/97.</title>
        <authorList>
            <person name="Malone K.M."/>
            <person name="Farrell D."/>
            <person name="Stuber T.P."/>
            <person name="Schubert O.T."/>
            <person name="Aebersold R."/>
            <person name="Robbe-Austerman S."/>
            <person name="Gordon S.V."/>
        </authorList>
    </citation>
    <scope>NUCLEOTIDE SEQUENCE [LARGE SCALE GENOMIC DNA]</scope>
    <scope>GENOME REANNOTATION</scope>
    <source>
        <strain>ATCC BAA-935 / AF2122/97</strain>
    </source>
</reference>
<accession>P0A5T9</accession>
<accession>A0A1R3XWV6</accession>
<accession>O06631</accession>
<accession>P54876</accession>
<accession>X2BG81</accession>
<sequence>MLDTVEHAATTPDQPQPYGELGLKDDEYRRIRQILGRRPTDTELAMYSVMWSEHCSYKSSKVHLRYFGETTSDEMRAAMLAGIGENAGVVDIGDGWAVTFKVESHNHPSYVEPYQGAATGVGGIVRDIMAMGARPVAVMDQLRFGAADAPDTRRVLDGVVRGIGGYGNSLGLPNIGGETVFDPCYAGNPLVNALCVGVLRQEDLHLAFASGAGNKIILFGARTGLDGIGGVSVLASDTFDAEGSRKKLPSVQVGDPFMEKVLIECCLELYAGGLVIGIQDLGGAGLSCATSELASAGDGGMTIQLDSVPLRAKEMTPAEVLCSESQERMCAVVSPKNVDAFLAVCRKWEVLATVIGEVTDGDRLQITWHGETVVDVPPRTVAHEGPVYQRPVARPDTQDALNADRSAKLSRPVTGDELRATLLALLGSPHLCSRAFITEQYDRYVRGNTVLAEHADGGMLRIDESTGRGIAVSTDASGRYTLLDPYAGAQLALAEAYRNVAVTGATPVAVTNCLNFGSPEDPGVMWQFTQAVRGLADGCADLGIPVTGGNVSFYNQTGSAAILPTPVVGVLGVIDDVRRRIPTGLGAEPGETLMLLGDTRDEFDGSVWAQVTADHLGGLPPVVDLAREKLLAAVLSSASRDGLVSAAHDLSEGGLAQAIVESALAGETGCRIVLPEGADPFVLLFSESAGRVLVAVPRTEESRFRGMCEARGLPAVRIGVVDQGSDAVEVQGLFAVSLAELRATSEAVLPRYFG</sequence>
<organism>
    <name type="scientific">Mycobacterium bovis (strain ATCC BAA-935 / AF2122/97)</name>
    <dbReference type="NCBI Taxonomy" id="233413"/>
    <lineage>
        <taxon>Bacteria</taxon>
        <taxon>Bacillati</taxon>
        <taxon>Actinomycetota</taxon>
        <taxon>Actinomycetes</taxon>
        <taxon>Mycobacteriales</taxon>
        <taxon>Mycobacteriaceae</taxon>
        <taxon>Mycobacterium</taxon>
        <taxon>Mycobacterium tuberculosis complex</taxon>
    </lineage>
</organism>
<feature type="chain" id="PRO_0000100470" description="Phosphoribosylformylglycinamidine synthase subunit PurL">
    <location>
        <begin position="1"/>
        <end position="754"/>
    </location>
</feature>
<feature type="region of interest" description="Disordered" evidence="2">
    <location>
        <begin position="1"/>
        <end position="21"/>
    </location>
</feature>
<feature type="active site" evidence="1">
    <location>
        <position position="54"/>
    </location>
</feature>
<feature type="active site" description="Proton acceptor" evidence="1">
    <location>
        <position position="105"/>
    </location>
</feature>
<feature type="binding site" evidence="1">
    <location>
        <position position="57"/>
    </location>
    <ligand>
        <name>ATP</name>
        <dbReference type="ChEBI" id="CHEBI:30616"/>
    </ligand>
</feature>
<feature type="binding site" evidence="1">
    <location>
        <position position="101"/>
    </location>
    <ligand>
        <name>ATP</name>
        <dbReference type="ChEBI" id="CHEBI:30616"/>
    </ligand>
</feature>
<feature type="binding site" evidence="1">
    <location>
        <position position="103"/>
    </location>
    <ligand>
        <name>Mg(2+)</name>
        <dbReference type="ChEBI" id="CHEBI:18420"/>
        <label>1</label>
    </ligand>
</feature>
<feature type="binding site" evidence="1">
    <location>
        <begin position="104"/>
        <end position="107"/>
    </location>
    <ligand>
        <name>substrate</name>
    </ligand>
</feature>
<feature type="binding site" evidence="1">
    <location>
        <position position="126"/>
    </location>
    <ligand>
        <name>substrate</name>
    </ligand>
</feature>
<feature type="binding site" evidence="1">
    <location>
        <position position="127"/>
    </location>
    <ligand>
        <name>Mg(2+)</name>
        <dbReference type="ChEBI" id="CHEBI:18420"/>
        <label>2</label>
    </ligand>
</feature>
<feature type="binding site" evidence="1">
    <location>
        <position position="252"/>
    </location>
    <ligand>
        <name>substrate</name>
    </ligand>
</feature>
<feature type="binding site" evidence="1">
    <location>
        <position position="280"/>
    </location>
    <ligand>
        <name>Mg(2+)</name>
        <dbReference type="ChEBI" id="CHEBI:18420"/>
        <label>2</label>
    </ligand>
</feature>
<feature type="binding site" evidence="1">
    <location>
        <begin position="324"/>
        <end position="326"/>
    </location>
    <ligand>
        <name>substrate</name>
    </ligand>
</feature>
<feature type="binding site" evidence="1">
    <location>
        <position position="512"/>
    </location>
    <ligand>
        <name>ATP</name>
        <dbReference type="ChEBI" id="CHEBI:30616"/>
    </ligand>
</feature>
<feature type="binding site" evidence="1">
    <location>
        <position position="549"/>
    </location>
    <ligand>
        <name>ATP</name>
        <dbReference type="ChEBI" id="CHEBI:30616"/>
    </ligand>
</feature>
<feature type="binding site" evidence="1">
    <location>
        <position position="550"/>
    </location>
    <ligand>
        <name>Mg(2+)</name>
        <dbReference type="ChEBI" id="CHEBI:18420"/>
        <label>1</label>
    </ligand>
</feature>
<feature type="binding site" evidence="1">
    <location>
        <position position="552"/>
    </location>
    <ligand>
        <name>substrate</name>
    </ligand>
</feature>
<proteinExistence type="inferred from homology"/>
<keyword id="KW-0067">ATP-binding</keyword>
<keyword id="KW-0963">Cytoplasm</keyword>
<keyword id="KW-0436">Ligase</keyword>
<keyword id="KW-0460">Magnesium</keyword>
<keyword id="KW-0479">Metal-binding</keyword>
<keyword id="KW-0547">Nucleotide-binding</keyword>
<keyword id="KW-0658">Purine biosynthesis</keyword>
<keyword id="KW-1185">Reference proteome</keyword>
<dbReference type="EC" id="6.3.5.3" evidence="1"/>
<dbReference type="EMBL" id="LT708304">
    <property type="protein sequence ID" value="SIT99425.1"/>
    <property type="molecule type" value="Genomic_DNA"/>
</dbReference>
<dbReference type="RefSeq" id="NP_854484.1">
    <property type="nucleotide sequence ID" value="NC_002945.3"/>
</dbReference>
<dbReference type="RefSeq" id="WP_003404114.1">
    <property type="nucleotide sequence ID" value="NC_002945.4"/>
</dbReference>
<dbReference type="SMR" id="P0A5T9"/>
<dbReference type="KEGG" id="mbo:BQ2027_MB0826"/>
<dbReference type="PATRIC" id="fig|233413.5.peg.898"/>
<dbReference type="UniPathway" id="UPA00074">
    <property type="reaction ID" value="UER00128"/>
</dbReference>
<dbReference type="Proteomes" id="UP000001419">
    <property type="component" value="Chromosome"/>
</dbReference>
<dbReference type="GO" id="GO:0005737">
    <property type="term" value="C:cytoplasm"/>
    <property type="evidence" value="ECO:0007669"/>
    <property type="project" value="UniProtKB-SubCell"/>
</dbReference>
<dbReference type="GO" id="GO:0005524">
    <property type="term" value="F:ATP binding"/>
    <property type="evidence" value="ECO:0007669"/>
    <property type="project" value="UniProtKB-UniRule"/>
</dbReference>
<dbReference type="GO" id="GO:0000287">
    <property type="term" value="F:magnesium ion binding"/>
    <property type="evidence" value="ECO:0007669"/>
    <property type="project" value="UniProtKB-UniRule"/>
</dbReference>
<dbReference type="GO" id="GO:0004642">
    <property type="term" value="F:phosphoribosylformylglycinamidine synthase activity"/>
    <property type="evidence" value="ECO:0007669"/>
    <property type="project" value="UniProtKB-UniRule"/>
</dbReference>
<dbReference type="GO" id="GO:0006189">
    <property type="term" value="P:'de novo' IMP biosynthetic process"/>
    <property type="evidence" value="ECO:0007669"/>
    <property type="project" value="UniProtKB-UniRule"/>
</dbReference>
<dbReference type="CDD" id="cd02203">
    <property type="entry name" value="PurL_repeat1"/>
    <property type="match status" value="1"/>
</dbReference>
<dbReference type="CDD" id="cd02204">
    <property type="entry name" value="PurL_repeat2"/>
    <property type="match status" value="1"/>
</dbReference>
<dbReference type="FunFam" id="3.30.1330.10:FF:000004">
    <property type="entry name" value="Phosphoribosylformylglycinamidine synthase subunit PurL"/>
    <property type="match status" value="1"/>
</dbReference>
<dbReference type="FunFam" id="3.30.1330.10:FF:000021">
    <property type="entry name" value="Phosphoribosylformylglycinamidine synthase subunit PurL"/>
    <property type="match status" value="1"/>
</dbReference>
<dbReference type="FunFam" id="3.90.650.10:FF:000009">
    <property type="entry name" value="Phosphoribosylformylglycinamidine synthase subunit PurL"/>
    <property type="match status" value="1"/>
</dbReference>
<dbReference type="FunFam" id="3.90.650.10:FF:000026">
    <property type="entry name" value="Phosphoribosylformylglycinamidine synthase subunit PurL"/>
    <property type="match status" value="1"/>
</dbReference>
<dbReference type="Gene3D" id="3.90.650.10">
    <property type="entry name" value="PurM-like C-terminal domain"/>
    <property type="match status" value="2"/>
</dbReference>
<dbReference type="Gene3D" id="3.30.1330.10">
    <property type="entry name" value="PurM-like, N-terminal domain"/>
    <property type="match status" value="2"/>
</dbReference>
<dbReference type="HAMAP" id="MF_00420">
    <property type="entry name" value="PurL_2"/>
    <property type="match status" value="1"/>
</dbReference>
<dbReference type="InterPro" id="IPR010074">
    <property type="entry name" value="PRibForGlyAmidine_synth_PurL"/>
</dbReference>
<dbReference type="InterPro" id="IPR041609">
    <property type="entry name" value="PurL_linker"/>
</dbReference>
<dbReference type="InterPro" id="IPR010918">
    <property type="entry name" value="PurM-like_C_dom"/>
</dbReference>
<dbReference type="InterPro" id="IPR036676">
    <property type="entry name" value="PurM-like_C_sf"/>
</dbReference>
<dbReference type="InterPro" id="IPR016188">
    <property type="entry name" value="PurM-like_N"/>
</dbReference>
<dbReference type="InterPro" id="IPR036921">
    <property type="entry name" value="PurM-like_N_sf"/>
</dbReference>
<dbReference type="NCBIfam" id="TIGR01736">
    <property type="entry name" value="FGAM_synth_II"/>
    <property type="match status" value="1"/>
</dbReference>
<dbReference type="NCBIfam" id="NF002290">
    <property type="entry name" value="PRK01213.1"/>
    <property type="match status" value="1"/>
</dbReference>
<dbReference type="PANTHER" id="PTHR43555">
    <property type="entry name" value="PHOSPHORIBOSYLFORMYLGLYCINAMIDINE SYNTHASE SUBUNIT PURL"/>
    <property type="match status" value="1"/>
</dbReference>
<dbReference type="PANTHER" id="PTHR43555:SF1">
    <property type="entry name" value="PHOSPHORIBOSYLFORMYLGLYCINAMIDINE SYNTHASE SUBUNIT PURL"/>
    <property type="match status" value="1"/>
</dbReference>
<dbReference type="Pfam" id="PF00586">
    <property type="entry name" value="AIRS"/>
    <property type="match status" value="2"/>
</dbReference>
<dbReference type="Pfam" id="PF02769">
    <property type="entry name" value="AIRS_C"/>
    <property type="match status" value="2"/>
</dbReference>
<dbReference type="Pfam" id="PF18072">
    <property type="entry name" value="FGAR-AT_linker"/>
    <property type="match status" value="1"/>
</dbReference>
<dbReference type="PIRSF" id="PIRSF001587">
    <property type="entry name" value="FGAM_synthase_II"/>
    <property type="match status" value="1"/>
</dbReference>
<dbReference type="SUPFAM" id="SSF56042">
    <property type="entry name" value="PurM C-terminal domain-like"/>
    <property type="match status" value="2"/>
</dbReference>
<dbReference type="SUPFAM" id="SSF55326">
    <property type="entry name" value="PurM N-terminal domain-like"/>
    <property type="match status" value="2"/>
</dbReference>
<protein>
    <recommendedName>
        <fullName evidence="1">Phosphoribosylformylglycinamidine synthase subunit PurL</fullName>
        <shortName evidence="1">FGAM synthase</shortName>
        <ecNumber evidence="1">6.3.5.3</ecNumber>
    </recommendedName>
    <alternativeName>
        <fullName evidence="1">Formylglycinamide ribonucleotide amidotransferase subunit II</fullName>
        <shortName evidence="1">FGAR amidotransferase II</shortName>
        <shortName evidence="1">FGAR-AT II</shortName>
    </alternativeName>
    <alternativeName>
        <fullName evidence="1">Glutamine amidotransferase PurL</fullName>
    </alternativeName>
    <alternativeName>
        <fullName evidence="1">Phosphoribosylformylglycinamidine synthase subunit II</fullName>
    </alternativeName>
</protein>